<proteinExistence type="inferred from homology"/>
<feature type="chain" id="PRO_0000185405" description="Probable acyl-CoA desaturase">
    <location>
        <begin position="1"/>
        <end position="479"/>
    </location>
</feature>
<feature type="topological domain" description="Cytoplasmic" evidence="8">
    <location>
        <begin position="1"/>
        <end position="61"/>
    </location>
</feature>
<feature type="transmembrane region" description="Helical" evidence="4">
    <location>
        <begin position="62"/>
        <end position="82"/>
    </location>
</feature>
<feature type="topological domain" description="Lumenal" evidence="8">
    <location>
        <begin position="83"/>
        <end position="89"/>
    </location>
</feature>
<feature type="transmembrane region" description="Helical" evidence="4">
    <location>
        <begin position="90"/>
        <end position="110"/>
    </location>
</feature>
<feature type="topological domain" description="Cytoplasmic" evidence="8">
    <location>
        <begin position="111"/>
        <end position="204"/>
    </location>
</feature>
<feature type="transmembrane region" description="Helical" evidence="4">
    <location>
        <begin position="205"/>
        <end position="225"/>
    </location>
</feature>
<feature type="topological domain" description="Lumenal" evidence="8">
    <location>
        <begin position="226"/>
        <end position="229"/>
    </location>
</feature>
<feature type="transmembrane region" description="Helical" evidence="4">
    <location>
        <begin position="230"/>
        <end position="250"/>
    </location>
</feature>
<feature type="topological domain" description="Cytoplasmic" evidence="8">
    <location>
        <begin position="251"/>
        <end position="479"/>
    </location>
</feature>
<feature type="domain" description="Cytochrome b5 heme-binding" evidence="5">
    <location>
        <begin position="357"/>
        <end position="433"/>
    </location>
</feature>
<feature type="region of interest" description="Disordered" evidence="6">
    <location>
        <begin position="1"/>
        <end position="28"/>
    </location>
</feature>
<feature type="short sequence motif" description="Histidine box-1" evidence="8">
    <location>
        <begin position="110"/>
        <end position="115"/>
    </location>
</feature>
<feature type="short sequence motif" description="Histidine box-2" evidence="8">
    <location>
        <begin position="147"/>
        <end position="151"/>
    </location>
</feature>
<feature type="short sequence motif" description="Histidine box-3" evidence="8">
    <location>
        <begin position="284"/>
        <end position="288"/>
    </location>
</feature>
<feature type="compositionally biased region" description="Low complexity" evidence="6">
    <location>
        <begin position="1"/>
        <end position="18"/>
    </location>
</feature>
<feature type="binding site" evidence="2">
    <location>
        <position position="110"/>
    </location>
    <ligand>
        <name>Fe cation</name>
        <dbReference type="ChEBI" id="CHEBI:24875"/>
        <label>1</label>
    </ligand>
</feature>
<feature type="binding site" evidence="2">
    <location>
        <position position="115"/>
    </location>
    <ligand>
        <name>Fe cation</name>
        <dbReference type="ChEBI" id="CHEBI:24875"/>
        <label>1</label>
    </ligand>
</feature>
<feature type="binding site" evidence="2">
    <location>
        <position position="147"/>
    </location>
    <ligand>
        <name>Fe cation</name>
        <dbReference type="ChEBI" id="CHEBI:24875"/>
        <label>1</label>
    </ligand>
</feature>
<feature type="binding site" evidence="2">
    <location>
        <position position="150"/>
    </location>
    <ligand>
        <name>Fe cation</name>
        <dbReference type="ChEBI" id="CHEBI:24875"/>
        <label>2</label>
    </ligand>
</feature>
<feature type="binding site" evidence="2">
    <location>
        <position position="151"/>
    </location>
    <ligand>
        <name>Fe cation</name>
        <dbReference type="ChEBI" id="CHEBI:24875"/>
        <label>1</label>
    </ligand>
</feature>
<feature type="binding site" evidence="2">
    <location>
        <position position="255"/>
    </location>
    <ligand>
        <name>Fe cation</name>
        <dbReference type="ChEBI" id="CHEBI:24875"/>
        <label>2</label>
    </ligand>
</feature>
<feature type="binding site" evidence="2">
    <location>
        <position position="284"/>
    </location>
    <ligand>
        <name>Fe cation</name>
        <dbReference type="ChEBI" id="CHEBI:24875"/>
        <label>2</label>
    </ligand>
</feature>
<feature type="binding site" evidence="2">
    <location>
        <position position="287"/>
    </location>
    <ligand>
        <name>Fe cation</name>
        <dbReference type="ChEBI" id="CHEBI:24875"/>
        <label>1</label>
    </ligand>
</feature>
<feature type="binding site" evidence="2">
    <location>
        <position position="288"/>
    </location>
    <ligand>
        <name>Fe cation</name>
        <dbReference type="ChEBI" id="CHEBI:24875"/>
        <label>2</label>
    </ligand>
</feature>
<feature type="binding site" description="axial binding residue" evidence="5">
    <location>
        <position position="390"/>
    </location>
    <ligand>
        <name>heme</name>
        <dbReference type="ChEBI" id="CHEBI:30413"/>
    </ligand>
    <ligandPart>
        <name>Fe</name>
        <dbReference type="ChEBI" id="CHEBI:18248"/>
    </ligandPart>
</feature>
<feature type="binding site" description="axial binding residue" evidence="5">
    <location>
        <position position="416"/>
    </location>
    <ligand>
        <name>heme</name>
        <dbReference type="ChEBI" id="CHEBI:30413"/>
    </ligand>
    <ligandPart>
        <name>Fe</name>
        <dbReference type="ChEBI" id="CHEBI:18248"/>
    </ligandPart>
</feature>
<feature type="sequence conflict" description="In Ref. 2." evidence="8" ref="2">
    <original>TMQNWW</original>
    <variation>GPCKTV</variation>
    <location>
        <begin position="54"/>
        <end position="59"/>
    </location>
</feature>
<keyword id="KW-0249">Electron transport</keyword>
<keyword id="KW-0275">Fatty acid biosynthesis</keyword>
<keyword id="KW-0276">Fatty acid metabolism</keyword>
<keyword id="KW-0349">Heme</keyword>
<keyword id="KW-0408">Iron</keyword>
<keyword id="KW-0444">Lipid biosynthesis</keyword>
<keyword id="KW-0443">Lipid metabolism</keyword>
<keyword id="KW-0472">Membrane</keyword>
<keyword id="KW-0479">Metal-binding</keyword>
<keyword id="KW-0560">Oxidoreductase</keyword>
<keyword id="KW-1185">Reference proteome</keyword>
<keyword id="KW-0812">Transmembrane</keyword>
<keyword id="KW-1133">Transmembrane helix</keyword>
<keyword id="KW-0813">Transport</keyword>
<organism>
    <name type="scientific">Schizosaccharomyces pombe (strain 972 / ATCC 24843)</name>
    <name type="common">Fission yeast</name>
    <dbReference type="NCBI Taxonomy" id="284812"/>
    <lineage>
        <taxon>Eukaryota</taxon>
        <taxon>Fungi</taxon>
        <taxon>Dikarya</taxon>
        <taxon>Ascomycota</taxon>
        <taxon>Taphrinomycotina</taxon>
        <taxon>Schizosaccharomycetes</taxon>
        <taxon>Schizosaccharomycetales</taxon>
        <taxon>Schizosaccharomycetaceae</taxon>
        <taxon>Schizosaccharomyces</taxon>
    </lineage>
</organism>
<accession>O94523</accession>
<accession>Q9UU24</accession>
<comment type="function">
    <text evidence="3">Stearoyl-CoA desaturase that utilizes O(2) and electrons from reduced cytochrome b5 to introduce the first double bond into saturated fatty acyl-CoA substrates. Catalyzes the insertion of a cis double bond at the delta-9 position into fatty acyl-CoA substrates including palmitoyl-CoA and stearoyl-CoA. Contributes to the biosynthesis of membrane phospholipids, cholesterol esters and triglycerides.</text>
</comment>
<comment type="catalytic activity">
    <reaction evidence="3">
        <text>octadecanoyl-CoA + 2 Fe(II)-[cytochrome b5] + O2 + 2 H(+) = (9Z)-octadecenoyl-CoA + 2 Fe(III)-[cytochrome b5] + 2 H2O</text>
        <dbReference type="Rhea" id="RHEA:19721"/>
        <dbReference type="Rhea" id="RHEA-COMP:10438"/>
        <dbReference type="Rhea" id="RHEA-COMP:10439"/>
        <dbReference type="ChEBI" id="CHEBI:15377"/>
        <dbReference type="ChEBI" id="CHEBI:15378"/>
        <dbReference type="ChEBI" id="CHEBI:15379"/>
        <dbReference type="ChEBI" id="CHEBI:29033"/>
        <dbReference type="ChEBI" id="CHEBI:29034"/>
        <dbReference type="ChEBI" id="CHEBI:57387"/>
        <dbReference type="ChEBI" id="CHEBI:57394"/>
        <dbReference type="EC" id="1.14.19.1"/>
    </reaction>
</comment>
<comment type="cofactor">
    <cofactor evidence="2">
        <name>Fe(2+)</name>
        <dbReference type="ChEBI" id="CHEBI:29033"/>
    </cofactor>
    <text evidence="2">Expected to bind 2 Fe(2+) ions per subunit.</text>
</comment>
<comment type="subcellular location">
    <subcellularLocation>
        <location evidence="7">Membrane</location>
        <topology evidence="7">Multi-pass membrane protein</topology>
    </subcellularLocation>
</comment>
<comment type="domain">
    <text evidence="1">The histidine box domains are involved in binding the catalytic metal ions.</text>
</comment>
<comment type="similarity">
    <text evidence="8">Belongs to the fatty acid desaturase type 1 family.</text>
</comment>
<name>ACO1_SCHPO</name>
<gene>
    <name type="ORF">SPCC1281.06c</name>
</gene>
<evidence type="ECO:0000250" key="1">
    <source>
        <dbReference type="UniProtKB" id="O00767"/>
    </source>
</evidence>
<evidence type="ECO:0000250" key="2">
    <source>
        <dbReference type="UniProtKB" id="P13516"/>
    </source>
</evidence>
<evidence type="ECO:0000250" key="3">
    <source>
        <dbReference type="UniProtKB" id="P21147"/>
    </source>
</evidence>
<evidence type="ECO:0000255" key="4"/>
<evidence type="ECO:0000255" key="5">
    <source>
        <dbReference type="PROSITE-ProRule" id="PRU00279"/>
    </source>
</evidence>
<evidence type="ECO:0000256" key="6">
    <source>
        <dbReference type="SAM" id="MobiDB-lite"/>
    </source>
</evidence>
<evidence type="ECO:0000269" key="7">
    <source>
    </source>
</evidence>
<evidence type="ECO:0000305" key="8"/>
<reference key="1">
    <citation type="journal article" date="2002" name="Nature">
        <title>The genome sequence of Schizosaccharomyces pombe.</title>
        <authorList>
            <person name="Wood V."/>
            <person name="Gwilliam R."/>
            <person name="Rajandream M.A."/>
            <person name="Lyne M.H."/>
            <person name="Lyne R."/>
            <person name="Stewart A."/>
            <person name="Sgouros J.G."/>
            <person name="Peat N."/>
            <person name="Hayles J."/>
            <person name="Baker S.G."/>
            <person name="Basham D."/>
            <person name="Bowman S."/>
            <person name="Brooks K."/>
            <person name="Brown D."/>
            <person name="Brown S."/>
            <person name="Chillingworth T."/>
            <person name="Churcher C.M."/>
            <person name="Collins M."/>
            <person name="Connor R."/>
            <person name="Cronin A."/>
            <person name="Davis P."/>
            <person name="Feltwell T."/>
            <person name="Fraser A."/>
            <person name="Gentles S."/>
            <person name="Goble A."/>
            <person name="Hamlin N."/>
            <person name="Harris D.E."/>
            <person name="Hidalgo J."/>
            <person name="Hodgson G."/>
            <person name="Holroyd S."/>
            <person name="Hornsby T."/>
            <person name="Howarth S."/>
            <person name="Huckle E.J."/>
            <person name="Hunt S."/>
            <person name="Jagels K."/>
            <person name="James K.D."/>
            <person name="Jones L."/>
            <person name="Jones M."/>
            <person name="Leather S."/>
            <person name="McDonald S."/>
            <person name="McLean J."/>
            <person name="Mooney P."/>
            <person name="Moule S."/>
            <person name="Mungall K.L."/>
            <person name="Murphy L.D."/>
            <person name="Niblett D."/>
            <person name="Odell C."/>
            <person name="Oliver K."/>
            <person name="O'Neil S."/>
            <person name="Pearson D."/>
            <person name="Quail M.A."/>
            <person name="Rabbinowitsch E."/>
            <person name="Rutherford K.M."/>
            <person name="Rutter S."/>
            <person name="Saunders D."/>
            <person name="Seeger K."/>
            <person name="Sharp S."/>
            <person name="Skelton J."/>
            <person name="Simmonds M.N."/>
            <person name="Squares R."/>
            <person name="Squares S."/>
            <person name="Stevens K."/>
            <person name="Taylor K."/>
            <person name="Taylor R.G."/>
            <person name="Tivey A."/>
            <person name="Walsh S.V."/>
            <person name="Warren T."/>
            <person name="Whitehead S."/>
            <person name="Woodward J.R."/>
            <person name="Volckaert G."/>
            <person name="Aert R."/>
            <person name="Robben J."/>
            <person name="Grymonprez B."/>
            <person name="Weltjens I."/>
            <person name="Vanstreels E."/>
            <person name="Rieger M."/>
            <person name="Schaefer M."/>
            <person name="Mueller-Auer S."/>
            <person name="Gabel C."/>
            <person name="Fuchs M."/>
            <person name="Duesterhoeft A."/>
            <person name="Fritzc C."/>
            <person name="Holzer E."/>
            <person name="Moestl D."/>
            <person name="Hilbert H."/>
            <person name="Borzym K."/>
            <person name="Langer I."/>
            <person name="Beck A."/>
            <person name="Lehrach H."/>
            <person name="Reinhardt R."/>
            <person name="Pohl T.M."/>
            <person name="Eger P."/>
            <person name="Zimmermann W."/>
            <person name="Wedler H."/>
            <person name="Wambutt R."/>
            <person name="Purnelle B."/>
            <person name="Goffeau A."/>
            <person name="Cadieu E."/>
            <person name="Dreano S."/>
            <person name="Gloux S."/>
            <person name="Lelaure V."/>
            <person name="Mottier S."/>
            <person name="Galibert F."/>
            <person name="Aves S.J."/>
            <person name="Xiang Z."/>
            <person name="Hunt C."/>
            <person name="Moore K."/>
            <person name="Hurst S.M."/>
            <person name="Lucas M."/>
            <person name="Rochet M."/>
            <person name="Gaillardin C."/>
            <person name="Tallada V.A."/>
            <person name="Garzon A."/>
            <person name="Thode G."/>
            <person name="Daga R.R."/>
            <person name="Cruzado L."/>
            <person name="Jimenez J."/>
            <person name="Sanchez M."/>
            <person name="del Rey F."/>
            <person name="Benito J."/>
            <person name="Dominguez A."/>
            <person name="Revuelta J.L."/>
            <person name="Moreno S."/>
            <person name="Armstrong J."/>
            <person name="Forsburg S.L."/>
            <person name="Cerutti L."/>
            <person name="Lowe T."/>
            <person name="McCombie W.R."/>
            <person name="Paulsen I."/>
            <person name="Potashkin J."/>
            <person name="Shpakovski G.V."/>
            <person name="Ussery D."/>
            <person name="Barrell B.G."/>
            <person name="Nurse P."/>
        </authorList>
    </citation>
    <scope>NUCLEOTIDE SEQUENCE [LARGE SCALE GENOMIC DNA]</scope>
    <source>
        <strain>972 / ATCC 24843</strain>
    </source>
</reference>
<reference key="2">
    <citation type="journal article" date="2000" name="Genes Cells">
        <title>Large-scale screening of intracellular protein localization in living fission yeast cells by the use of a GFP-fusion genomic DNA library.</title>
        <authorList>
            <person name="Ding D.-Q."/>
            <person name="Tomita Y."/>
            <person name="Yamamoto A."/>
            <person name="Chikashige Y."/>
            <person name="Haraguchi T."/>
            <person name="Hiraoka Y."/>
        </authorList>
    </citation>
    <scope>NUCLEOTIDE SEQUENCE [LARGE SCALE GENOMIC DNA] OF 54-257</scope>
    <scope>SUBCELLULAR LOCATION</scope>
    <source>
        <strain>ATCC 38364 / 968</strain>
    </source>
</reference>
<protein>
    <recommendedName>
        <fullName>Probable acyl-CoA desaturase</fullName>
        <ecNumber evidence="3">1.14.19.1</ecNumber>
    </recommendedName>
    <alternativeName>
        <fullName>Delta(9)-desaturase</fullName>
        <shortName>Delta-9 desaturase</shortName>
    </alternativeName>
    <alternativeName>
        <fullName>Fatty acid desaturase</fullName>
    </alternativeName>
    <alternativeName>
        <fullName>Stearoyl-CoA desaturase</fullName>
    </alternativeName>
</protein>
<dbReference type="EC" id="1.14.19.1" evidence="3"/>
<dbReference type="EMBL" id="CU329672">
    <property type="protein sequence ID" value="CAA22827.1"/>
    <property type="molecule type" value="Genomic_DNA"/>
</dbReference>
<dbReference type="EMBL" id="AB027859">
    <property type="protein sequence ID" value="BAA87163.1"/>
    <property type="molecule type" value="Genomic_DNA"/>
</dbReference>
<dbReference type="PIR" id="T40925">
    <property type="entry name" value="T40925"/>
</dbReference>
<dbReference type="SMR" id="O94523"/>
<dbReference type="BioGRID" id="275336">
    <property type="interactions" value="6"/>
</dbReference>
<dbReference type="FunCoup" id="O94523">
    <property type="interactions" value="225"/>
</dbReference>
<dbReference type="STRING" id="284812.O94523"/>
<dbReference type="iPTMnet" id="O94523"/>
<dbReference type="PaxDb" id="4896-SPCC1281.06c.1"/>
<dbReference type="EnsemblFungi" id="SPCC1281.06c.1">
    <property type="protein sequence ID" value="SPCC1281.06c.1:pep"/>
    <property type="gene ID" value="SPCC1281.06c"/>
</dbReference>
<dbReference type="KEGG" id="spo:2538753"/>
<dbReference type="PomBase" id="SPCC1281.06c"/>
<dbReference type="VEuPathDB" id="FungiDB:SPCC1281.06c"/>
<dbReference type="eggNOG" id="KOG0537">
    <property type="taxonomic scope" value="Eukaryota"/>
</dbReference>
<dbReference type="eggNOG" id="KOG1600">
    <property type="taxonomic scope" value="Eukaryota"/>
</dbReference>
<dbReference type="HOGENOM" id="CLU_027359_3_2_1"/>
<dbReference type="InParanoid" id="O94523"/>
<dbReference type="OMA" id="WNDWRGG"/>
<dbReference type="PhylomeDB" id="O94523"/>
<dbReference type="Reactome" id="R-SPO-75105">
    <property type="pathway name" value="Fatty acyl-CoA biosynthesis"/>
</dbReference>
<dbReference type="PRO" id="PR:O94523"/>
<dbReference type="Proteomes" id="UP000002485">
    <property type="component" value="Chromosome III"/>
</dbReference>
<dbReference type="GO" id="GO:0032541">
    <property type="term" value="C:cortical endoplasmic reticulum"/>
    <property type="evidence" value="ECO:0000314"/>
    <property type="project" value="PomBase"/>
</dbReference>
<dbReference type="GO" id="GO:0005783">
    <property type="term" value="C:endoplasmic reticulum"/>
    <property type="evidence" value="ECO:0007005"/>
    <property type="project" value="PomBase"/>
</dbReference>
<dbReference type="GO" id="GO:0005789">
    <property type="term" value="C:endoplasmic reticulum membrane"/>
    <property type="evidence" value="ECO:0000318"/>
    <property type="project" value="GO_Central"/>
</dbReference>
<dbReference type="GO" id="GO:0097038">
    <property type="term" value="C:perinuclear endoplasmic reticulum"/>
    <property type="evidence" value="ECO:0000314"/>
    <property type="project" value="PomBase"/>
</dbReference>
<dbReference type="GO" id="GO:0005506">
    <property type="term" value="F:iron ion binding"/>
    <property type="evidence" value="ECO:0000318"/>
    <property type="project" value="GO_Central"/>
</dbReference>
<dbReference type="GO" id="GO:0004768">
    <property type="term" value="F:stearoyl-CoA 9-desaturase activity"/>
    <property type="evidence" value="ECO:0000318"/>
    <property type="project" value="GO_Central"/>
</dbReference>
<dbReference type="GO" id="GO:0006636">
    <property type="term" value="P:unsaturated fatty acid biosynthetic process"/>
    <property type="evidence" value="ECO:0000318"/>
    <property type="project" value="GO_Central"/>
</dbReference>
<dbReference type="CDD" id="cd03505">
    <property type="entry name" value="Delta9-FADS-like"/>
    <property type="match status" value="1"/>
</dbReference>
<dbReference type="Gene3D" id="3.10.120.10">
    <property type="entry name" value="Cytochrome b5-like heme/steroid binding domain"/>
    <property type="match status" value="1"/>
</dbReference>
<dbReference type="InterPro" id="IPR009160">
    <property type="entry name" value="Acyl-CoA_deSatase_haem/ster-bd"/>
</dbReference>
<dbReference type="InterPro" id="IPR015876">
    <property type="entry name" value="Acyl-CoA_DS"/>
</dbReference>
<dbReference type="InterPro" id="IPR001199">
    <property type="entry name" value="Cyt_B5-like_heme/steroid-bd"/>
</dbReference>
<dbReference type="InterPro" id="IPR036400">
    <property type="entry name" value="Cyt_B5-like_heme/steroid_sf"/>
</dbReference>
<dbReference type="InterPro" id="IPR005804">
    <property type="entry name" value="FA_desaturase_dom"/>
</dbReference>
<dbReference type="InterPro" id="IPR001522">
    <property type="entry name" value="FADS-1_CS"/>
</dbReference>
<dbReference type="PANTHER" id="PTHR11351">
    <property type="entry name" value="ACYL-COA DESATURASE"/>
    <property type="match status" value="1"/>
</dbReference>
<dbReference type="PANTHER" id="PTHR11351:SF31">
    <property type="entry name" value="DESATURASE 1, ISOFORM A-RELATED"/>
    <property type="match status" value="1"/>
</dbReference>
<dbReference type="Pfam" id="PF00173">
    <property type="entry name" value="Cyt-b5"/>
    <property type="match status" value="1"/>
</dbReference>
<dbReference type="Pfam" id="PF00487">
    <property type="entry name" value="FA_desaturase"/>
    <property type="match status" value="1"/>
</dbReference>
<dbReference type="PIRSF" id="PIRSF000345">
    <property type="entry name" value="OLE1"/>
    <property type="match status" value="1"/>
</dbReference>
<dbReference type="PRINTS" id="PR00075">
    <property type="entry name" value="FACDDSATRASE"/>
</dbReference>
<dbReference type="SMART" id="SM01117">
    <property type="entry name" value="Cyt-b5"/>
    <property type="match status" value="1"/>
</dbReference>
<dbReference type="SUPFAM" id="SSF55856">
    <property type="entry name" value="Cytochrome b5-like heme/steroid binding domain"/>
    <property type="match status" value="1"/>
</dbReference>
<dbReference type="PROSITE" id="PS50255">
    <property type="entry name" value="CYTOCHROME_B5_2"/>
    <property type="match status" value="1"/>
</dbReference>
<dbReference type="PROSITE" id="PS00476">
    <property type="entry name" value="FATTY_ACID_DESATUR_1"/>
    <property type="match status" value="1"/>
</dbReference>
<sequence>MTAPSATAFSSATTQPTTEGNASMRKRTIPVVPSVPERKWDPKAPKHIQEQPWTMQNWWRHLNWLHCMLIFGLPMIAIYGVFTTPLQTKTLIFAIIYYAYSGLGITAGYHRLWSHRAYKAKKPLEYFLAAGGAAAFEGSIRWWSRDHRAHHRYTDTDKDPYNVKKGFWYAHVGWMIILQNPRRIGRSDVSDLNSDPFVMFNHRHFLPIASFMAFIFPSLFCGLLWGDYRGGYFYAGVCRLVFVHHATFCVNSLAHLIGSQPFDDTNSARNHFITALVTLGEGNHNYHHAFPNDYRNGLRWYEYDPTKIFIYIASLFGLAYNLNTFPDNEIQKGIVQQKQKVLDRWRAKLNWGIPLEQLPVMEFEDFLEQSKTRPLVLINGVVHDMTGFEHPGGQGLLRSAFGKDATAAFNGGVYDHTNGAHNLLSTYRVAVVRGGMEVEVWKSGAGAQLPMKDTQGQKIVRVGEQITRIQPPIEAAAAN</sequence>